<sequence>MKLLENSHFEAVNSQLCVETGDAHIIGRIESYSCKMAGDDKHMFKQFCQEGQPHVLEALSPPQTGISPSRLGKSQGADEEGPLSDKCSRKTLFYLIATLNESFRPDYDFSAARAHEFSREPSLNWVVNAVNSSLVSALGDDFTSLRPNLWDAVDEEINLSECDIYSYNPDLDCDPFGEDGNLWSFNYFFYNKKLKRIVFFSCRSISGYTYTHCDAGAELDMDLEEEDDEDEPSSAAGDRPQLMCI</sequence>
<dbReference type="EMBL" id="BC046951">
    <property type="protein sequence ID" value="AAH46951.1"/>
    <property type="molecule type" value="mRNA"/>
</dbReference>
<dbReference type="RefSeq" id="NP_001080708.1">
    <property type="nucleotide sequence ID" value="NM_001087239.1"/>
</dbReference>
<dbReference type="SMR" id="Q7ZWL6"/>
<dbReference type="DNASU" id="380400"/>
<dbReference type="GeneID" id="380400"/>
<dbReference type="KEGG" id="xla:380400"/>
<dbReference type="AGR" id="Xenbase:XB-GENE-6253630"/>
<dbReference type="CTD" id="380400"/>
<dbReference type="Xenbase" id="XB-GENE-6253630">
    <property type="gene designation" value="maf1.L"/>
</dbReference>
<dbReference type="OrthoDB" id="277029at2759"/>
<dbReference type="Proteomes" id="UP000186698">
    <property type="component" value="Chromosome 6L"/>
</dbReference>
<dbReference type="Bgee" id="380400">
    <property type="expression patterns" value="Expressed in egg cell and 19 other cell types or tissues"/>
</dbReference>
<dbReference type="GO" id="GO:0005737">
    <property type="term" value="C:cytoplasm"/>
    <property type="evidence" value="ECO:0000250"/>
    <property type="project" value="UniProtKB"/>
</dbReference>
<dbReference type="GO" id="GO:0005634">
    <property type="term" value="C:nucleus"/>
    <property type="evidence" value="ECO:0000250"/>
    <property type="project" value="UniProtKB"/>
</dbReference>
<dbReference type="GO" id="GO:0000994">
    <property type="term" value="F:RNA polymerase III core binding"/>
    <property type="evidence" value="ECO:0000318"/>
    <property type="project" value="GO_Central"/>
</dbReference>
<dbReference type="GO" id="GO:0016480">
    <property type="term" value="P:negative regulation of transcription by RNA polymerase III"/>
    <property type="evidence" value="ECO:0000250"/>
    <property type="project" value="UniProtKB"/>
</dbReference>
<dbReference type="FunFam" id="3.40.1000.50:FF:000001">
    <property type="entry name" value="Repressor of RNA polymerase III transcription MAF1"/>
    <property type="match status" value="1"/>
</dbReference>
<dbReference type="FunFam" id="3.40.1000.50:FF:000002">
    <property type="entry name" value="Repressor of RNA polymerase III transcription MAF1"/>
    <property type="match status" value="1"/>
</dbReference>
<dbReference type="Gene3D" id="3.40.1000.50">
    <property type="entry name" value="Repressor of RNA polymerase III transcription Maf1"/>
    <property type="match status" value="2"/>
</dbReference>
<dbReference type="InterPro" id="IPR015257">
    <property type="entry name" value="Maf1"/>
</dbReference>
<dbReference type="InterPro" id="IPR038564">
    <property type="entry name" value="Maf1_sf"/>
</dbReference>
<dbReference type="PANTHER" id="PTHR22504">
    <property type="entry name" value="REPRESSOR OF RNA POLYMERASE III TRANSCRIPTION MAF1"/>
    <property type="match status" value="1"/>
</dbReference>
<dbReference type="PANTHER" id="PTHR22504:SF0">
    <property type="entry name" value="REPRESSOR OF RNA POLYMERASE III TRANSCRIPTION MAF1 HOMOLOG"/>
    <property type="match status" value="1"/>
</dbReference>
<dbReference type="Pfam" id="PF09174">
    <property type="entry name" value="Maf1"/>
    <property type="match status" value="1"/>
</dbReference>
<dbReference type="PIRSF" id="PIRSF037240">
    <property type="entry name" value="RNA_polIII_Trep_MAF1"/>
    <property type="match status" value="1"/>
</dbReference>
<protein>
    <recommendedName>
        <fullName>Repressor of RNA polymerase III transcription MAF1 homolog</fullName>
    </recommendedName>
</protein>
<organism>
    <name type="scientific">Xenopus laevis</name>
    <name type="common">African clawed frog</name>
    <dbReference type="NCBI Taxonomy" id="8355"/>
    <lineage>
        <taxon>Eukaryota</taxon>
        <taxon>Metazoa</taxon>
        <taxon>Chordata</taxon>
        <taxon>Craniata</taxon>
        <taxon>Vertebrata</taxon>
        <taxon>Euteleostomi</taxon>
        <taxon>Amphibia</taxon>
        <taxon>Batrachia</taxon>
        <taxon>Anura</taxon>
        <taxon>Pipoidea</taxon>
        <taxon>Pipidae</taxon>
        <taxon>Xenopodinae</taxon>
        <taxon>Xenopus</taxon>
        <taxon>Xenopus</taxon>
    </lineage>
</organism>
<feature type="chain" id="PRO_0000337196" description="Repressor of RNA polymerase III transcription MAF1 homolog">
    <location>
        <begin position="1"/>
        <end position="245"/>
    </location>
</feature>
<feature type="region of interest" description="Disordered" evidence="2">
    <location>
        <begin position="59"/>
        <end position="84"/>
    </location>
</feature>
<feature type="region of interest" description="Disordered" evidence="2">
    <location>
        <begin position="223"/>
        <end position="245"/>
    </location>
</feature>
<feature type="compositionally biased region" description="Acidic residues" evidence="2">
    <location>
        <begin position="223"/>
        <end position="232"/>
    </location>
</feature>
<accession>Q7ZWL6</accession>
<reference key="1">
    <citation type="submission" date="2003-02" db="EMBL/GenBank/DDBJ databases">
        <authorList>
            <consortium name="NIH - Xenopus Gene Collection (XGC) project"/>
        </authorList>
    </citation>
    <scope>NUCLEOTIDE SEQUENCE [LARGE SCALE MRNA]</scope>
    <source>
        <tissue>Embryo</tissue>
    </source>
</reference>
<comment type="function">
    <text evidence="1">Element of the TORC1 signaling pathway that acts as a mediator of diverse signals and that represses RNA polymerase III transcription. Inhibits the de novo assembly of TFIIIB onto DNA (By similarity).</text>
</comment>
<comment type="subcellular location">
    <subcellularLocation>
        <location evidence="1">Nucleus</location>
    </subcellularLocation>
    <subcellularLocation>
        <location evidence="1">Cytoplasm</location>
    </subcellularLocation>
</comment>
<comment type="similarity">
    <text evidence="3">Belongs to the MAF1 family.</text>
</comment>
<gene>
    <name type="primary">maf1</name>
</gene>
<evidence type="ECO:0000250" key="1"/>
<evidence type="ECO:0000256" key="2">
    <source>
        <dbReference type="SAM" id="MobiDB-lite"/>
    </source>
</evidence>
<evidence type="ECO:0000305" key="3"/>
<keyword id="KW-0963">Cytoplasm</keyword>
<keyword id="KW-0539">Nucleus</keyword>
<keyword id="KW-1185">Reference proteome</keyword>
<keyword id="KW-0678">Repressor</keyword>
<keyword id="KW-0804">Transcription</keyword>
<keyword id="KW-0805">Transcription regulation</keyword>
<name>MAF1_XENLA</name>
<proteinExistence type="evidence at transcript level"/>